<name>DNAK_LIMRJ</name>
<organism>
    <name type="scientific">Limosilactobacillus reuteri subsp. reuteri (strain JCM 1112)</name>
    <name type="common">Lactobacillus reuteri</name>
    <dbReference type="NCBI Taxonomy" id="557433"/>
    <lineage>
        <taxon>Bacteria</taxon>
        <taxon>Bacillati</taxon>
        <taxon>Bacillota</taxon>
        <taxon>Bacilli</taxon>
        <taxon>Lactobacillales</taxon>
        <taxon>Lactobacillaceae</taxon>
        <taxon>Limosilactobacillus</taxon>
    </lineage>
</organism>
<protein>
    <recommendedName>
        <fullName evidence="1">Chaperone protein DnaK</fullName>
    </recommendedName>
    <alternativeName>
        <fullName evidence="1">HSP70</fullName>
    </alternativeName>
    <alternativeName>
        <fullName evidence="1">Heat shock 70 kDa protein</fullName>
    </alternativeName>
    <alternativeName>
        <fullName evidence="1">Heat shock protein 70</fullName>
    </alternativeName>
</protein>
<proteinExistence type="inferred from homology"/>
<evidence type="ECO:0000255" key="1">
    <source>
        <dbReference type="HAMAP-Rule" id="MF_00332"/>
    </source>
</evidence>
<evidence type="ECO:0000256" key="2">
    <source>
        <dbReference type="SAM" id="MobiDB-lite"/>
    </source>
</evidence>
<reference key="1">
    <citation type="journal article" date="2008" name="DNA Res.">
        <title>Comparative genome analysis of Lactobacillus reuteri and Lactobacillus fermentum reveal a genomic island for reuterin and cobalamin production.</title>
        <authorList>
            <person name="Morita H."/>
            <person name="Toh H."/>
            <person name="Fukuda S."/>
            <person name="Horikawa H."/>
            <person name="Oshima K."/>
            <person name="Suzuki T."/>
            <person name="Murakami M."/>
            <person name="Hisamatsu S."/>
            <person name="Kato Y."/>
            <person name="Takizawa T."/>
            <person name="Fukuoka H."/>
            <person name="Yoshimura T."/>
            <person name="Itoh K."/>
            <person name="O'Sullivan D.J."/>
            <person name="McKay L.L."/>
            <person name="Ohno H."/>
            <person name="Kikuchi J."/>
            <person name="Masaoka T."/>
            <person name="Hattori M."/>
        </authorList>
    </citation>
    <scope>NUCLEOTIDE SEQUENCE [LARGE SCALE GENOMIC DNA]</scope>
    <source>
        <strain>JCM 1112</strain>
    </source>
</reference>
<feature type="chain" id="PRO_1000119719" description="Chaperone protein DnaK">
    <location>
        <begin position="1"/>
        <end position="621"/>
    </location>
</feature>
<feature type="region of interest" description="Disordered" evidence="2">
    <location>
        <begin position="476"/>
        <end position="508"/>
    </location>
</feature>
<feature type="region of interest" description="Disordered" evidence="2">
    <location>
        <begin position="521"/>
        <end position="559"/>
    </location>
</feature>
<feature type="region of interest" description="Disordered" evidence="2">
    <location>
        <begin position="578"/>
        <end position="621"/>
    </location>
</feature>
<feature type="compositionally biased region" description="Basic and acidic residues" evidence="2">
    <location>
        <begin position="486"/>
        <end position="508"/>
    </location>
</feature>
<feature type="compositionally biased region" description="Low complexity" evidence="2">
    <location>
        <begin position="588"/>
        <end position="601"/>
    </location>
</feature>
<feature type="compositionally biased region" description="Basic and acidic residues" evidence="2">
    <location>
        <begin position="610"/>
        <end position="621"/>
    </location>
</feature>
<feature type="modified residue" description="Phosphothreonine; by autocatalysis" evidence="1">
    <location>
        <position position="176"/>
    </location>
</feature>
<accession>B2G6W3</accession>
<keyword id="KW-0067">ATP-binding</keyword>
<keyword id="KW-0143">Chaperone</keyword>
<keyword id="KW-0547">Nucleotide-binding</keyword>
<keyword id="KW-0597">Phosphoprotein</keyword>
<keyword id="KW-0346">Stress response</keyword>
<comment type="function">
    <text evidence="1">Acts as a chaperone.</text>
</comment>
<comment type="induction">
    <text evidence="1">By stress conditions e.g. heat shock.</text>
</comment>
<comment type="similarity">
    <text evidence="1">Belongs to the heat shock protein 70 family.</text>
</comment>
<gene>
    <name evidence="1" type="primary">dnaK</name>
    <name type="ordered locus">LAR_0679</name>
</gene>
<sequence>MASNKIIGIDLGTTNSAVAVMEGNEPKIITNPEGSRTTPSVVSFKNGETQVGEVAKRQAITNPNTISSIKSHMGEAGYTVEVDGKKYTPQEISAMILQYLKKYAEDYIGDTVTQAVITVPAYFNDAQRQATKDAGKIAGLDVKRIINEPTASSLAYGLDKKDKDEKILVYDLGGGTFDVSILELGDGVFQVLSTNGDTHLGGDDFDQKIMDWLIDGFKEEHGVDLSQDKMALQRLKDAAEKAKKDLSGVQEAQISLPFISAGENGPLHLEKTLSRAQFNQLTNDLVERTKQPVLNALKDADLTFDDIDEVILNGGSTRIPAVQEMVKELTGKEPNHSINPDEAVALGAAIQGGVLTGDVKDVVLLDVTPLSLGIETMGGVFTKLIDRNTTIPTSKSQIFSTAADNQPAVDIHVLQGERPMAADNKTLGNFQLTDIPAAPRGVPQIKVTFDIDKNGIVNVSAEDQGTHKKQNITIKSNSGLSDEEIERMKKDAEEHAEADKKKKEEVDLKNEVDQELFQVDKTLKEVKGKVPEDDIKKAESARDELKKAKESGNLDEMKAKKDALNKVIQDLSVKLYQQAQGAQGGAANGQPGDSQQNGNDNGNDDNTVDGDFKDVTPDDKK</sequence>
<dbReference type="EMBL" id="AP007281">
    <property type="protein sequence ID" value="BAG25195.1"/>
    <property type="molecule type" value="Genomic_DNA"/>
</dbReference>
<dbReference type="RefSeq" id="WP_003668169.1">
    <property type="nucleotide sequence ID" value="NC_010609.1"/>
</dbReference>
<dbReference type="SMR" id="B2G6W3"/>
<dbReference type="KEGG" id="lrf:LAR_0679"/>
<dbReference type="HOGENOM" id="CLU_005965_2_4_9"/>
<dbReference type="GO" id="GO:0005524">
    <property type="term" value="F:ATP binding"/>
    <property type="evidence" value="ECO:0007669"/>
    <property type="project" value="UniProtKB-UniRule"/>
</dbReference>
<dbReference type="GO" id="GO:0140662">
    <property type="term" value="F:ATP-dependent protein folding chaperone"/>
    <property type="evidence" value="ECO:0007669"/>
    <property type="project" value="InterPro"/>
</dbReference>
<dbReference type="GO" id="GO:0051082">
    <property type="term" value="F:unfolded protein binding"/>
    <property type="evidence" value="ECO:0007669"/>
    <property type="project" value="InterPro"/>
</dbReference>
<dbReference type="CDD" id="cd10234">
    <property type="entry name" value="ASKHA_NBD_HSP70_DnaK-like"/>
    <property type="match status" value="1"/>
</dbReference>
<dbReference type="FunFam" id="2.60.34.10:FF:000014">
    <property type="entry name" value="Chaperone protein DnaK HSP70"/>
    <property type="match status" value="1"/>
</dbReference>
<dbReference type="FunFam" id="1.20.1270.10:FF:000001">
    <property type="entry name" value="Molecular chaperone DnaK"/>
    <property type="match status" value="1"/>
</dbReference>
<dbReference type="FunFam" id="3.30.420.40:FF:000071">
    <property type="entry name" value="Molecular chaperone DnaK"/>
    <property type="match status" value="1"/>
</dbReference>
<dbReference type="FunFam" id="3.90.640.10:FF:000003">
    <property type="entry name" value="Molecular chaperone DnaK"/>
    <property type="match status" value="1"/>
</dbReference>
<dbReference type="Gene3D" id="1.20.1270.10">
    <property type="match status" value="1"/>
</dbReference>
<dbReference type="Gene3D" id="3.30.420.40">
    <property type="match status" value="2"/>
</dbReference>
<dbReference type="Gene3D" id="3.90.640.10">
    <property type="entry name" value="Actin, Chain A, domain 4"/>
    <property type="match status" value="1"/>
</dbReference>
<dbReference type="Gene3D" id="2.60.34.10">
    <property type="entry name" value="Substrate Binding Domain Of DNAk, Chain A, domain 1"/>
    <property type="match status" value="1"/>
</dbReference>
<dbReference type="HAMAP" id="MF_00332">
    <property type="entry name" value="DnaK"/>
    <property type="match status" value="1"/>
</dbReference>
<dbReference type="InterPro" id="IPR043129">
    <property type="entry name" value="ATPase_NBD"/>
</dbReference>
<dbReference type="InterPro" id="IPR012725">
    <property type="entry name" value="Chaperone_DnaK"/>
</dbReference>
<dbReference type="InterPro" id="IPR018181">
    <property type="entry name" value="Heat_shock_70_CS"/>
</dbReference>
<dbReference type="InterPro" id="IPR029048">
    <property type="entry name" value="HSP70_C_sf"/>
</dbReference>
<dbReference type="InterPro" id="IPR029047">
    <property type="entry name" value="HSP70_peptide-bd_sf"/>
</dbReference>
<dbReference type="InterPro" id="IPR013126">
    <property type="entry name" value="Hsp_70_fam"/>
</dbReference>
<dbReference type="NCBIfam" id="NF001413">
    <property type="entry name" value="PRK00290.1"/>
    <property type="match status" value="1"/>
</dbReference>
<dbReference type="NCBIfam" id="TIGR02350">
    <property type="entry name" value="prok_dnaK"/>
    <property type="match status" value="1"/>
</dbReference>
<dbReference type="PANTHER" id="PTHR19375">
    <property type="entry name" value="HEAT SHOCK PROTEIN 70KDA"/>
    <property type="match status" value="1"/>
</dbReference>
<dbReference type="Pfam" id="PF00012">
    <property type="entry name" value="HSP70"/>
    <property type="match status" value="2"/>
</dbReference>
<dbReference type="PRINTS" id="PR00301">
    <property type="entry name" value="HEATSHOCK70"/>
</dbReference>
<dbReference type="SUPFAM" id="SSF53067">
    <property type="entry name" value="Actin-like ATPase domain"/>
    <property type="match status" value="2"/>
</dbReference>
<dbReference type="SUPFAM" id="SSF100934">
    <property type="entry name" value="Heat shock protein 70kD (HSP70), C-terminal subdomain"/>
    <property type="match status" value="1"/>
</dbReference>
<dbReference type="SUPFAM" id="SSF100920">
    <property type="entry name" value="Heat shock protein 70kD (HSP70), peptide-binding domain"/>
    <property type="match status" value="1"/>
</dbReference>
<dbReference type="PROSITE" id="PS00297">
    <property type="entry name" value="HSP70_1"/>
    <property type="match status" value="1"/>
</dbReference>
<dbReference type="PROSITE" id="PS00329">
    <property type="entry name" value="HSP70_2"/>
    <property type="match status" value="1"/>
</dbReference>
<dbReference type="PROSITE" id="PS01036">
    <property type="entry name" value="HSP70_3"/>
    <property type="match status" value="1"/>
</dbReference>